<gene>
    <name type="ordered locus">RBAM_023530</name>
</gene>
<proteinExistence type="inferred from homology"/>
<name>Y2353_BACVZ</name>
<dbReference type="EMBL" id="CP000560">
    <property type="protein sequence ID" value="ABS74713.1"/>
    <property type="molecule type" value="Genomic_DNA"/>
</dbReference>
<dbReference type="RefSeq" id="WP_012118011.1">
    <property type="nucleotide sequence ID" value="NC_009725.2"/>
</dbReference>
<dbReference type="SMR" id="A7Z6T7"/>
<dbReference type="GeneID" id="93081490"/>
<dbReference type="KEGG" id="bay:RBAM_023530"/>
<dbReference type="HOGENOM" id="CLU_106619_0_0_9"/>
<dbReference type="Proteomes" id="UP000001120">
    <property type="component" value="Chromosome"/>
</dbReference>
<dbReference type="CDD" id="cd18720">
    <property type="entry name" value="PIN_YqxD-like"/>
    <property type="match status" value="1"/>
</dbReference>
<dbReference type="HAMAP" id="MF_00489">
    <property type="entry name" value="UPF0178"/>
    <property type="match status" value="1"/>
</dbReference>
<dbReference type="InterPro" id="IPR003791">
    <property type="entry name" value="UPF0178"/>
</dbReference>
<dbReference type="NCBIfam" id="NF001095">
    <property type="entry name" value="PRK00124.1"/>
    <property type="match status" value="1"/>
</dbReference>
<dbReference type="PANTHER" id="PTHR35146">
    <property type="entry name" value="UPF0178 PROTEIN YAII"/>
    <property type="match status" value="1"/>
</dbReference>
<dbReference type="PANTHER" id="PTHR35146:SF1">
    <property type="entry name" value="UPF0178 PROTEIN YAII"/>
    <property type="match status" value="1"/>
</dbReference>
<dbReference type="Pfam" id="PF02639">
    <property type="entry name" value="DUF188"/>
    <property type="match status" value="1"/>
</dbReference>
<comment type="similarity">
    <text evidence="1">Belongs to the UPF0178 family.</text>
</comment>
<sequence length="168" mass="19148">MEGWRISLLNEKEKTIFVDADACPVKEEIMLIASQVSVRVIFVASFEHYQLSRSKDENWVYVDPHKEAADLYIANHVRSGDVVVTQDIGLASLLLNRNIAVLSERGRSYTEDTIDFALMSRHMSGKMRRSGIHSKGPKKLNKEDRNRFVTLLKKILSNDEGISNQNIE</sequence>
<organism>
    <name type="scientific">Bacillus velezensis (strain DSM 23117 / BGSC 10A6 / LMG 26770 / FZB42)</name>
    <name type="common">Bacillus amyloliquefaciens subsp. plantarum</name>
    <dbReference type="NCBI Taxonomy" id="326423"/>
    <lineage>
        <taxon>Bacteria</taxon>
        <taxon>Bacillati</taxon>
        <taxon>Bacillota</taxon>
        <taxon>Bacilli</taxon>
        <taxon>Bacillales</taxon>
        <taxon>Bacillaceae</taxon>
        <taxon>Bacillus</taxon>
        <taxon>Bacillus amyloliquefaciens group</taxon>
    </lineage>
</organism>
<evidence type="ECO:0000255" key="1">
    <source>
        <dbReference type="HAMAP-Rule" id="MF_00489"/>
    </source>
</evidence>
<reference key="1">
    <citation type="journal article" date="2007" name="Nat. Biotechnol.">
        <title>Comparative analysis of the complete genome sequence of the plant growth-promoting bacterium Bacillus amyloliquefaciens FZB42.</title>
        <authorList>
            <person name="Chen X.H."/>
            <person name="Koumoutsi A."/>
            <person name="Scholz R."/>
            <person name="Eisenreich A."/>
            <person name="Schneider K."/>
            <person name="Heinemeyer I."/>
            <person name="Morgenstern B."/>
            <person name="Voss B."/>
            <person name="Hess W.R."/>
            <person name="Reva O."/>
            <person name="Junge H."/>
            <person name="Voigt B."/>
            <person name="Jungblut P.R."/>
            <person name="Vater J."/>
            <person name="Suessmuth R."/>
            <person name="Liesegang H."/>
            <person name="Strittmatter A."/>
            <person name="Gottschalk G."/>
            <person name="Borriss R."/>
        </authorList>
    </citation>
    <scope>NUCLEOTIDE SEQUENCE [LARGE SCALE GENOMIC DNA]</scope>
    <source>
        <strain>DSM 23117 / BGSC 10A6 / LMG 26770 / FZB42</strain>
    </source>
</reference>
<protein>
    <recommendedName>
        <fullName evidence="1">UPF0178 protein RBAM_023530</fullName>
    </recommendedName>
</protein>
<accession>A7Z6T7</accession>
<feature type="chain" id="PRO_1000081371" description="UPF0178 protein RBAM_023530">
    <location>
        <begin position="1"/>
        <end position="168"/>
    </location>
</feature>